<accession>Q9SUN3</accession>
<organism>
    <name type="scientific">Arabidopsis thaliana</name>
    <name type="common">Mouse-ear cress</name>
    <dbReference type="NCBI Taxonomy" id="3702"/>
    <lineage>
        <taxon>Eukaryota</taxon>
        <taxon>Viridiplantae</taxon>
        <taxon>Streptophyta</taxon>
        <taxon>Embryophyta</taxon>
        <taxon>Tracheophyta</taxon>
        <taxon>Spermatophyta</taxon>
        <taxon>Magnoliopsida</taxon>
        <taxon>eudicotyledons</taxon>
        <taxon>Gunneridae</taxon>
        <taxon>Pentapetalae</taxon>
        <taxon>rosids</taxon>
        <taxon>malvids</taxon>
        <taxon>Brassicales</taxon>
        <taxon>Brassicaceae</taxon>
        <taxon>Camelineae</taxon>
        <taxon>Arabidopsis</taxon>
    </lineage>
</organism>
<protein>
    <recommendedName>
        <fullName>Probable UDP-arabinose 4-epimerase 3</fullName>
        <ecNumber>5.1.3.5</ecNumber>
    </recommendedName>
    <alternativeName>
        <fullName>UDP-D-xylose 4-epimerase 3</fullName>
    </alternativeName>
</protein>
<keyword id="KW-0119">Carbohydrate metabolism</keyword>
<keyword id="KW-0333">Golgi apparatus</keyword>
<keyword id="KW-0413">Isomerase</keyword>
<keyword id="KW-0472">Membrane</keyword>
<keyword id="KW-0520">NAD</keyword>
<keyword id="KW-1185">Reference proteome</keyword>
<keyword id="KW-0735">Signal-anchor</keyword>
<keyword id="KW-0812">Transmembrane</keyword>
<keyword id="KW-1133">Transmembrane helix</keyword>
<reference key="1">
    <citation type="journal article" date="1999" name="Nature">
        <title>Sequence and analysis of chromosome 4 of the plant Arabidopsis thaliana.</title>
        <authorList>
            <person name="Mayer K.F.X."/>
            <person name="Schueller C."/>
            <person name="Wambutt R."/>
            <person name="Murphy G."/>
            <person name="Volckaert G."/>
            <person name="Pohl T."/>
            <person name="Duesterhoeft A."/>
            <person name="Stiekema W."/>
            <person name="Entian K.-D."/>
            <person name="Terryn N."/>
            <person name="Harris B."/>
            <person name="Ansorge W."/>
            <person name="Brandt P."/>
            <person name="Grivell L.A."/>
            <person name="Rieger M."/>
            <person name="Weichselgartner M."/>
            <person name="de Simone V."/>
            <person name="Obermaier B."/>
            <person name="Mache R."/>
            <person name="Mueller M."/>
            <person name="Kreis M."/>
            <person name="Delseny M."/>
            <person name="Puigdomenech P."/>
            <person name="Watson M."/>
            <person name="Schmidtheini T."/>
            <person name="Reichert B."/>
            <person name="Portetelle D."/>
            <person name="Perez-Alonso M."/>
            <person name="Boutry M."/>
            <person name="Bancroft I."/>
            <person name="Vos P."/>
            <person name="Hoheisel J."/>
            <person name="Zimmermann W."/>
            <person name="Wedler H."/>
            <person name="Ridley P."/>
            <person name="Langham S.-A."/>
            <person name="McCullagh B."/>
            <person name="Bilham L."/>
            <person name="Robben J."/>
            <person name="van der Schueren J."/>
            <person name="Grymonprez B."/>
            <person name="Chuang Y.-J."/>
            <person name="Vandenbussche F."/>
            <person name="Braeken M."/>
            <person name="Weltjens I."/>
            <person name="Voet M."/>
            <person name="Bastiaens I."/>
            <person name="Aert R."/>
            <person name="Defoor E."/>
            <person name="Weitzenegger T."/>
            <person name="Bothe G."/>
            <person name="Ramsperger U."/>
            <person name="Hilbert H."/>
            <person name="Braun M."/>
            <person name="Holzer E."/>
            <person name="Brandt A."/>
            <person name="Peters S."/>
            <person name="van Staveren M."/>
            <person name="Dirkse W."/>
            <person name="Mooijman P."/>
            <person name="Klein Lankhorst R."/>
            <person name="Rose M."/>
            <person name="Hauf J."/>
            <person name="Koetter P."/>
            <person name="Berneiser S."/>
            <person name="Hempel S."/>
            <person name="Feldpausch M."/>
            <person name="Lamberth S."/>
            <person name="Van den Daele H."/>
            <person name="De Keyser A."/>
            <person name="Buysshaert C."/>
            <person name="Gielen J."/>
            <person name="Villarroel R."/>
            <person name="De Clercq R."/>
            <person name="van Montagu M."/>
            <person name="Rogers J."/>
            <person name="Cronin A."/>
            <person name="Quail M.A."/>
            <person name="Bray-Allen S."/>
            <person name="Clark L."/>
            <person name="Doggett J."/>
            <person name="Hall S."/>
            <person name="Kay M."/>
            <person name="Lennard N."/>
            <person name="McLay K."/>
            <person name="Mayes R."/>
            <person name="Pettett A."/>
            <person name="Rajandream M.A."/>
            <person name="Lyne M."/>
            <person name="Benes V."/>
            <person name="Rechmann S."/>
            <person name="Borkova D."/>
            <person name="Bloecker H."/>
            <person name="Scharfe M."/>
            <person name="Grimm M."/>
            <person name="Loehnert T.-H."/>
            <person name="Dose S."/>
            <person name="de Haan M."/>
            <person name="Maarse A.C."/>
            <person name="Schaefer M."/>
            <person name="Mueller-Auer S."/>
            <person name="Gabel C."/>
            <person name="Fuchs M."/>
            <person name="Fartmann B."/>
            <person name="Granderath K."/>
            <person name="Dauner D."/>
            <person name="Herzl A."/>
            <person name="Neumann S."/>
            <person name="Argiriou A."/>
            <person name="Vitale D."/>
            <person name="Liguori R."/>
            <person name="Piravandi E."/>
            <person name="Massenet O."/>
            <person name="Quigley F."/>
            <person name="Clabauld G."/>
            <person name="Muendlein A."/>
            <person name="Felber R."/>
            <person name="Schnabl S."/>
            <person name="Hiller R."/>
            <person name="Schmidt W."/>
            <person name="Lecharny A."/>
            <person name="Aubourg S."/>
            <person name="Chefdor F."/>
            <person name="Cooke R."/>
            <person name="Berger C."/>
            <person name="Monfort A."/>
            <person name="Casacuberta E."/>
            <person name="Gibbons T."/>
            <person name="Weber N."/>
            <person name="Vandenbol M."/>
            <person name="Bargues M."/>
            <person name="Terol J."/>
            <person name="Torres A."/>
            <person name="Perez-Perez A."/>
            <person name="Purnelle B."/>
            <person name="Bent E."/>
            <person name="Johnson S."/>
            <person name="Tacon D."/>
            <person name="Jesse T."/>
            <person name="Heijnen L."/>
            <person name="Schwarz S."/>
            <person name="Scholler P."/>
            <person name="Heber S."/>
            <person name="Francs P."/>
            <person name="Bielke C."/>
            <person name="Frishman D."/>
            <person name="Haase D."/>
            <person name="Lemcke K."/>
            <person name="Mewes H.-W."/>
            <person name="Stocker S."/>
            <person name="Zaccaria P."/>
            <person name="Bevan M."/>
            <person name="Wilson R.K."/>
            <person name="de la Bastide M."/>
            <person name="Habermann K."/>
            <person name="Parnell L."/>
            <person name="Dedhia N."/>
            <person name="Gnoj L."/>
            <person name="Schutz K."/>
            <person name="Huang E."/>
            <person name="Spiegel L."/>
            <person name="Sekhon M."/>
            <person name="Murray J."/>
            <person name="Sheet P."/>
            <person name="Cordes M."/>
            <person name="Abu-Threideh J."/>
            <person name="Stoneking T."/>
            <person name="Kalicki J."/>
            <person name="Graves T."/>
            <person name="Harmon G."/>
            <person name="Edwards J."/>
            <person name="Latreille P."/>
            <person name="Courtney L."/>
            <person name="Cloud J."/>
            <person name="Abbott A."/>
            <person name="Scott K."/>
            <person name="Johnson D."/>
            <person name="Minx P."/>
            <person name="Bentley D."/>
            <person name="Fulton B."/>
            <person name="Miller N."/>
            <person name="Greco T."/>
            <person name="Kemp K."/>
            <person name="Kramer J."/>
            <person name="Fulton L."/>
            <person name="Mardis E."/>
            <person name="Dante M."/>
            <person name="Pepin K."/>
            <person name="Hillier L.W."/>
            <person name="Nelson J."/>
            <person name="Spieth J."/>
            <person name="Ryan E."/>
            <person name="Andrews S."/>
            <person name="Geisel C."/>
            <person name="Layman D."/>
            <person name="Du H."/>
            <person name="Ali J."/>
            <person name="Berghoff A."/>
            <person name="Jones K."/>
            <person name="Drone K."/>
            <person name="Cotton M."/>
            <person name="Joshu C."/>
            <person name="Antonoiu B."/>
            <person name="Zidanic M."/>
            <person name="Strong C."/>
            <person name="Sun H."/>
            <person name="Lamar B."/>
            <person name="Yordan C."/>
            <person name="Ma P."/>
            <person name="Zhong J."/>
            <person name="Preston R."/>
            <person name="Vil D."/>
            <person name="Shekher M."/>
            <person name="Matero A."/>
            <person name="Shah R."/>
            <person name="Swaby I.K."/>
            <person name="O'Shaughnessy A."/>
            <person name="Rodriguez M."/>
            <person name="Hoffman J."/>
            <person name="Till S."/>
            <person name="Granat S."/>
            <person name="Shohdy N."/>
            <person name="Hasegawa A."/>
            <person name="Hameed A."/>
            <person name="Lodhi M."/>
            <person name="Johnson A."/>
            <person name="Chen E."/>
            <person name="Marra M.A."/>
            <person name="Martienssen R."/>
            <person name="McCombie W.R."/>
        </authorList>
    </citation>
    <scope>NUCLEOTIDE SEQUENCE [LARGE SCALE GENOMIC DNA]</scope>
    <source>
        <strain>cv. Columbia</strain>
    </source>
</reference>
<reference key="2">
    <citation type="journal article" date="2017" name="Plant J.">
        <title>Araport11: a complete reannotation of the Arabidopsis thaliana reference genome.</title>
        <authorList>
            <person name="Cheng C.Y."/>
            <person name="Krishnakumar V."/>
            <person name="Chan A.P."/>
            <person name="Thibaud-Nissen F."/>
            <person name="Schobel S."/>
            <person name="Town C.D."/>
        </authorList>
    </citation>
    <scope>GENOME REANNOTATION</scope>
    <source>
        <strain>cv. Columbia</strain>
    </source>
</reference>
<reference key="3">
    <citation type="journal article" date="2003" name="Science">
        <title>Empirical analysis of transcriptional activity in the Arabidopsis genome.</title>
        <authorList>
            <person name="Yamada K."/>
            <person name="Lim J."/>
            <person name="Dale J.M."/>
            <person name="Chen H."/>
            <person name="Shinn P."/>
            <person name="Palm C.J."/>
            <person name="Southwick A.M."/>
            <person name="Wu H.C."/>
            <person name="Kim C.J."/>
            <person name="Nguyen M."/>
            <person name="Pham P.K."/>
            <person name="Cheuk R.F."/>
            <person name="Karlin-Newmann G."/>
            <person name="Liu S.X."/>
            <person name="Lam B."/>
            <person name="Sakano H."/>
            <person name="Wu T."/>
            <person name="Yu G."/>
            <person name="Miranda M."/>
            <person name="Quach H.L."/>
            <person name="Tripp M."/>
            <person name="Chang C.H."/>
            <person name="Lee J.M."/>
            <person name="Toriumi M.J."/>
            <person name="Chan M.M."/>
            <person name="Tang C.C."/>
            <person name="Onodera C.S."/>
            <person name="Deng J.M."/>
            <person name="Akiyama K."/>
            <person name="Ansari Y."/>
            <person name="Arakawa T."/>
            <person name="Banh J."/>
            <person name="Banno F."/>
            <person name="Bowser L."/>
            <person name="Brooks S.Y."/>
            <person name="Carninci P."/>
            <person name="Chao Q."/>
            <person name="Choy N."/>
            <person name="Enju A."/>
            <person name="Goldsmith A.D."/>
            <person name="Gurjal M."/>
            <person name="Hansen N.F."/>
            <person name="Hayashizaki Y."/>
            <person name="Johnson-Hopson C."/>
            <person name="Hsuan V.W."/>
            <person name="Iida K."/>
            <person name="Karnes M."/>
            <person name="Khan S."/>
            <person name="Koesema E."/>
            <person name="Ishida J."/>
            <person name="Jiang P.X."/>
            <person name="Jones T."/>
            <person name="Kawai J."/>
            <person name="Kamiya A."/>
            <person name="Meyers C."/>
            <person name="Nakajima M."/>
            <person name="Narusaka M."/>
            <person name="Seki M."/>
            <person name="Sakurai T."/>
            <person name="Satou M."/>
            <person name="Tamse R."/>
            <person name="Vaysberg M."/>
            <person name="Wallender E.K."/>
            <person name="Wong C."/>
            <person name="Yamamura Y."/>
            <person name="Yuan S."/>
            <person name="Shinozaki K."/>
            <person name="Davis R.W."/>
            <person name="Theologis A."/>
            <person name="Ecker J.R."/>
        </authorList>
    </citation>
    <scope>NUCLEOTIDE SEQUENCE [LARGE SCALE MRNA] OF 33-411</scope>
    <source>
        <strain>cv. Columbia</strain>
    </source>
</reference>
<name>ARAE3_ARATH</name>
<comment type="catalytic activity">
    <reaction>
        <text>UDP-beta-L-arabinopyranose = UDP-alpha-D-xylose</text>
        <dbReference type="Rhea" id="RHEA:11320"/>
        <dbReference type="ChEBI" id="CHEBI:57632"/>
        <dbReference type="ChEBI" id="CHEBI:61457"/>
        <dbReference type="EC" id="5.1.3.5"/>
    </reaction>
</comment>
<comment type="cofactor">
    <cofactor evidence="1">
        <name>NAD(+)</name>
        <dbReference type="ChEBI" id="CHEBI:57540"/>
    </cofactor>
</comment>
<comment type="pathway">
    <text>Nucleotide-sugar biosynthesis; UDP-L-arabinose biosynthesis; UDP-L-arabinose from UDP-alpha-D-xylose: step 1/1.</text>
</comment>
<comment type="pathway">
    <text>Cell wall biogenesis; cell wall polysaccharide biosynthesis.</text>
</comment>
<comment type="subcellular location">
    <subcellularLocation>
        <location evidence="4">Golgi apparatus</location>
        <location evidence="4">Golgi stack membrane</location>
        <topology evidence="4">Single-pass type II membrane protein</topology>
    </subcellularLocation>
</comment>
<comment type="similarity">
    <text evidence="4">Belongs to the NAD(P)-dependent epimerase/dehydratase family.</text>
</comment>
<comment type="sequence caution" evidence="4">
    <conflict type="erroneous gene model prediction">
        <sequence resource="EMBL-CDS" id="CAB45812"/>
    </conflict>
</comment>
<comment type="sequence caution" evidence="4">
    <conflict type="erroneous gene model prediction">
        <sequence resource="EMBL-CDS" id="CAB79046"/>
    </conflict>
</comment>
<evidence type="ECO:0000250" key="1"/>
<evidence type="ECO:0000255" key="2"/>
<evidence type="ECO:0000256" key="3">
    <source>
        <dbReference type="SAM" id="MobiDB-lite"/>
    </source>
</evidence>
<evidence type="ECO:0000305" key="4"/>
<gene>
    <name type="ordered locus">At4g20460</name>
    <name type="ORF">F9F13.110</name>
</gene>
<feature type="chain" id="PRO_0000183231" description="Probable UDP-arabinose 4-epimerase 3">
    <location>
        <begin position="1"/>
        <end position="411"/>
    </location>
</feature>
<feature type="topological domain" description="Cytoplasmic" evidence="2">
    <location>
        <begin position="1"/>
        <end position="31"/>
    </location>
</feature>
<feature type="transmembrane region" description="Helical; Signal-anchor for type II membrane protein" evidence="2">
    <location>
        <begin position="32"/>
        <end position="50"/>
    </location>
</feature>
<feature type="topological domain" description="Lumenal" evidence="2">
    <location>
        <begin position="51"/>
        <end position="411"/>
    </location>
</feature>
<feature type="region of interest" description="Disordered" evidence="3">
    <location>
        <begin position="1"/>
        <end position="22"/>
    </location>
</feature>
<feature type="compositionally biased region" description="Polar residues" evidence="3">
    <location>
        <begin position="1"/>
        <end position="13"/>
    </location>
</feature>
<feature type="active site" description="Proton acceptor" evidence="1">
    <location>
        <position position="219"/>
    </location>
</feature>
<feature type="binding site" evidence="1">
    <location>
        <begin position="71"/>
        <end position="102"/>
    </location>
    <ligand>
        <name>NAD(+)</name>
        <dbReference type="ChEBI" id="CHEBI:57540"/>
    </ligand>
</feature>
<dbReference type="EC" id="5.1.3.5"/>
<dbReference type="EMBL" id="AL080253">
    <property type="protein sequence ID" value="CAB45812.1"/>
    <property type="status" value="ALT_SEQ"/>
    <property type="molecule type" value="Genomic_DNA"/>
</dbReference>
<dbReference type="EMBL" id="AL161553">
    <property type="protein sequence ID" value="CAB79046.1"/>
    <property type="status" value="ALT_SEQ"/>
    <property type="molecule type" value="Genomic_DNA"/>
</dbReference>
<dbReference type="EMBL" id="CP002687">
    <property type="protein sequence ID" value="AEE84335.1"/>
    <property type="molecule type" value="Genomic_DNA"/>
</dbReference>
<dbReference type="EMBL" id="AY133709">
    <property type="protein sequence ID" value="AAM91643.1"/>
    <property type="molecule type" value="mRNA"/>
</dbReference>
<dbReference type="PIR" id="T10588">
    <property type="entry name" value="T10588"/>
</dbReference>
<dbReference type="RefSeq" id="NP_193779.2">
    <property type="nucleotide sequence ID" value="NM_118165.3"/>
</dbReference>
<dbReference type="SMR" id="Q9SUN3"/>
<dbReference type="FunCoup" id="Q9SUN3">
    <property type="interactions" value="143"/>
</dbReference>
<dbReference type="STRING" id="3702.Q9SUN3"/>
<dbReference type="PaxDb" id="3702-AT4G20460.1"/>
<dbReference type="ProteomicsDB" id="246915"/>
<dbReference type="EnsemblPlants" id="AT4G20460.1">
    <property type="protein sequence ID" value="AT4G20460.1"/>
    <property type="gene ID" value="AT4G20460"/>
</dbReference>
<dbReference type="GeneID" id="827794"/>
<dbReference type="Gramene" id="AT4G20460.1">
    <property type="protein sequence ID" value="AT4G20460.1"/>
    <property type="gene ID" value="AT4G20460"/>
</dbReference>
<dbReference type="KEGG" id="ath:AT4G20460"/>
<dbReference type="Araport" id="AT4G20460"/>
<dbReference type="TAIR" id="AT4G20460"/>
<dbReference type="eggNOG" id="KOG1371">
    <property type="taxonomic scope" value="Eukaryota"/>
</dbReference>
<dbReference type="HOGENOM" id="CLU_007383_1_10_1"/>
<dbReference type="InParanoid" id="Q9SUN3"/>
<dbReference type="OMA" id="IAVMEYP"/>
<dbReference type="BioCyc" id="ARA:AT4G20460-MONOMER"/>
<dbReference type="BRENDA" id="5.1.3.5">
    <property type="organism ID" value="399"/>
</dbReference>
<dbReference type="UniPathway" id="UPA00797">
    <property type="reaction ID" value="UER00772"/>
</dbReference>
<dbReference type="UniPathway" id="UPA00963"/>
<dbReference type="PRO" id="PR:Q9SUN3"/>
<dbReference type="Proteomes" id="UP000006548">
    <property type="component" value="Chromosome 4"/>
</dbReference>
<dbReference type="ExpressionAtlas" id="Q9SUN3">
    <property type="expression patterns" value="baseline and differential"/>
</dbReference>
<dbReference type="GO" id="GO:0032580">
    <property type="term" value="C:Golgi cisterna membrane"/>
    <property type="evidence" value="ECO:0007669"/>
    <property type="project" value="UniProtKB-SubCell"/>
</dbReference>
<dbReference type="GO" id="GO:0050373">
    <property type="term" value="F:UDP-arabinose 4-epimerase activity"/>
    <property type="evidence" value="ECO:0007669"/>
    <property type="project" value="UniProtKB-EC"/>
</dbReference>
<dbReference type="GO" id="GO:0003978">
    <property type="term" value="F:UDP-glucose 4-epimerase activity"/>
    <property type="evidence" value="ECO:0007669"/>
    <property type="project" value="InterPro"/>
</dbReference>
<dbReference type="GO" id="GO:0045227">
    <property type="term" value="P:capsule polysaccharide biosynthetic process"/>
    <property type="evidence" value="ECO:0007669"/>
    <property type="project" value="UniProtKB-UniPathway"/>
</dbReference>
<dbReference type="GO" id="GO:0006012">
    <property type="term" value="P:galactose metabolic process"/>
    <property type="evidence" value="ECO:0007669"/>
    <property type="project" value="InterPro"/>
</dbReference>
<dbReference type="GO" id="GO:0033358">
    <property type="term" value="P:UDP-L-arabinose biosynthetic process"/>
    <property type="evidence" value="ECO:0007669"/>
    <property type="project" value="UniProtKB-UniPathway"/>
</dbReference>
<dbReference type="CDD" id="cd05247">
    <property type="entry name" value="UDP_G4E_1_SDR_e"/>
    <property type="match status" value="1"/>
</dbReference>
<dbReference type="Gene3D" id="3.40.50.720">
    <property type="entry name" value="NAD(P)-binding Rossmann-like Domain"/>
    <property type="match status" value="1"/>
</dbReference>
<dbReference type="Gene3D" id="3.90.25.10">
    <property type="entry name" value="UDP-galactose 4-epimerase, domain 1"/>
    <property type="match status" value="1"/>
</dbReference>
<dbReference type="InterPro" id="IPR016040">
    <property type="entry name" value="NAD(P)-bd_dom"/>
</dbReference>
<dbReference type="InterPro" id="IPR036291">
    <property type="entry name" value="NAD(P)-bd_dom_sf"/>
</dbReference>
<dbReference type="InterPro" id="IPR005886">
    <property type="entry name" value="UDP_G4E"/>
</dbReference>
<dbReference type="NCBIfam" id="TIGR01179">
    <property type="entry name" value="galE"/>
    <property type="match status" value="1"/>
</dbReference>
<dbReference type="PANTHER" id="PTHR43725:SF50">
    <property type="entry name" value="UDP-ARABINOSE 4-EPIMERASE 3-RELATED"/>
    <property type="match status" value="1"/>
</dbReference>
<dbReference type="PANTHER" id="PTHR43725">
    <property type="entry name" value="UDP-GLUCOSE 4-EPIMERASE"/>
    <property type="match status" value="1"/>
</dbReference>
<dbReference type="Pfam" id="PF16363">
    <property type="entry name" value="GDP_Man_Dehyd"/>
    <property type="match status" value="1"/>
</dbReference>
<dbReference type="SUPFAM" id="SSF51735">
    <property type="entry name" value="NAD(P)-binding Rossmann-fold domains"/>
    <property type="match status" value="1"/>
</dbReference>
<sequence length="411" mass="45155">MLSFSRARSQGRNTRPLGGGMEYLEPKRKSNVMGKIILVVSLTALCIFMLKHAPSFTSPTAFSRSEEGVTHVLVTGGAGYIGSHAALRLLKDSYRVTIVDNLSRGNLGAVKVLQGLFPEPGRLQFIYADLGDAKAVDKIFSENAFDAVMHFAAVAYVGESTLDPLKYYHNITSNTLVVLEAVARHKVKKLIYSSTCATYGEPDKMPIVEVTPQVPINPYGKAKKMAEDMILDFSKNSDMAVMILRYFNVIGSDPEGRLGEAPKPELREHGRISGACFDAARGVIPGLQVKGTDYKTGDGTCVRDYIDVTDLVDAHVKALEKAKPRNVGIYNVGTGKGRSVKEFVEACKKATGVDIKVDFLPRRPGDYAEVYSDPAKILRDLNWSARYTNLQESLEVAWKWQKTHPHGYASS</sequence>
<proteinExistence type="evidence at transcript level"/>